<reference key="1">
    <citation type="journal article" date="2003" name="Nat. Genet.">
        <title>Comparative analysis of the genome sequences of Bordetella pertussis, Bordetella parapertussis and Bordetella bronchiseptica.</title>
        <authorList>
            <person name="Parkhill J."/>
            <person name="Sebaihia M."/>
            <person name="Preston A."/>
            <person name="Murphy L.D."/>
            <person name="Thomson N.R."/>
            <person name="Harris D.E."/>
            <person name="Holden M.T.G."/>
            <person name="Churcher C.M."/>
            <person name="Bentley S.D."/>
            <person name="Mungall K.L."/>
            <person name="Cerdeno-Tarraga A.-M."/>
            <person name="Temple L."/>
            <person name="James K.D."/>
            <person name="Harris B."/>
            <person name="Quail M.A."/>
            <person name="Achtman M."/>
            <person name="Atkin R."/>
            <person name="Baker S."/>
            <person name="Basham D."/>
            <person name="Bason N."/>
            <person name="Cherevach I."/>
            <person name="Chillingworth T."/>
            <person name="Collins M."/>
            <person name="Cronin A."/>
            <person name="Davis P."/>
            <person name="Doggett J."/>
            <person name="Feltwell T."/>
            <person name="Goble A."/>
            <person name="Hamlin N."/>
            <person name="Hauser H."/>
            <person name="Holroyd S."/>
            <person name="Jagels K."/>
            <person name="Leather S."/>
            <person name="Moule S."/>
            <person name="Norberczak H."/>
            <person name="O'Neil S."/>
            <person name="Ormond D."/>
            <person name="Price C."/>
            <person name="Rabbinowitsch E."/>
            <person name="Rutter S."/>
            <person name="Sanders M."/>
            <person name="Saunders D."/>
            <person name="Seeger K."/>
            <person name="Sharp S."/>
            <person name="Simmonds M."/>
            <person name="Skelton J."/>
            <person name="Squares R."/>
            <person name="Squares S."/>
            <person name="Stevens K."/>
            <person name="Unwin L."/>
            <person name="Whitehead S."/>
            <person name="Barrell B.G."/>
            <person name="Maskell D.J."/>
        </authorList>
    </citation>
    <scope>NUCLEOTIDE SEQUENCE [LARGE SCALE GENOMIC DNA]</scope>
    <source>
        <strain>12822 / ATCC BAA-587 / NCTC 13253</strain>
    </source>
</reference>
<feature type="chain" id="PRO_0000070737" description="Chaperone protein DnaJ">
    <location>
        <begin position="1"/>
        <end position="377"/>
    </location>
</feature>
<feature type="domain" description="J" evidence="1">
    <location>
        <begin position="5"/>
        <end position="70"/>
    </location>
</feature>
<feature type="repeat" description="CXXCXGXG motif">
    <location>
        <begin position="150"/>
        <end position="157"/>
    </location>
</feature>
<feature type="repeat" description="CXXCXGXG motif">
    <location>
        <begin position="167"/>
        <end position="174"/>
    </location>
</feature>
<feature type="repeat" description="CXXCXGXG motif">
    <location>
        <begin position="189"/>
        <end position="196"/>
    </location>
</feature>
<feature type="repeat" description="CXXCXGXG motif">
    <location>
        <begin position="203"/>
        <end position="210"/>
    </location>
</feature>
<feature type="zinc finger region" description="CR-type" evidence="1">
    <location>
        <begin position="137"/>
        <end position="215"/>
    </location>
</feature>
<feature type="binding site" evidence="1">
    <location>
        <position position="150"/>
    </location>
    <ligand>
        <name>Zn(2+)</name>
        <dbReference type="ChEBI" id="CHEBI:29105"/>
        <label>1</label>
    </ligand>
</feature>
<feature type="binding site" evidence="1">
    <location>
        <position position="153"/>
    </location>
    <ligand>
        <name>Zn(2+)</name>
        <dbReference type="ChEBI" id="CHEBI:29105"/>
        <label>1</label>
    </ligand>
</feature>
<feature type="binding site" evidence="1">
    <location>
        <position position="167"/>
    </location>
    <ligand>
        <name>Zn(2+)</name>
        <dbReference type="ChEBI" id="CHEBI:29105"/>
        <label>2</label>
    </ligand>
</feature>
<feature type="binding site" evidence="1">
    <location>
        <position position="170"/>
    </location>
    <ligand>
        <name>Zn(2+)</name>
        <dbReference type="ChEBI" id="CHEBI:29105"/>
        <label>2</label>
    </ligand>
</feature>
<feature type="binding site" evidence="1">
    <location>
        <position position="189"/>
    </location>
    <ligand>
        <name>Zn(2+)</name>
        <dbReference type="ChEBI" id="CHEBI:29105"/>
        <label>2</label>
    </ligand>
</feature>
<feature type="binding site" evidence="1">
    <location>
        <position position="192"/>
    </location>
    <ligand>
        <name>Zn(2+)</name>
        <dbReference type="ChEBI" id="CHEBI:29105"/>
        <label>2</label>
    </ligand>
</feature>
<feature type="binding site" evidence="1">
    <location>
        <position position="203"/>
    </location>
    <ligand>
        <name>Zn(2+)</name>
        <dbReference type="ChEBI" id="CHEBI:29105"/>
        <label>1</label>
    </ligand>
</feature>
<feature type="binding site" evidence="1">
    <location>
        <position position="206"/>
    </location>
    <ligand>
        <name>Zn(2+)</name>
        <dbReference type="ChEBI" id="CHEBI:29105"/>
        <label>1</label>
    </ligand>
</feature>
<name>DNAJ_BORPA</name>
<dbReference type="EMBL" id="BX640433">
    <property type="protein sequence ID" value="CAE38768.1"/>
    <property type="molecule type" value="Genomic_DNA"/>
</dbReference>
<dbReference type="RefSeq" id="WP_010929084.1">
    <property type="nucleotide sequence ID" value="NC_002928.3"/>
</dbReference>
<dbReference type="SMR" id="Q7W520"/>
<dbReference type="GeneID" id="69602399"/>
<dbReference type="GeneID" id="93205270"/>
<dbReference type="KEGG" id="bpa:BPP3484"/>
<dbReference type="HOGENOM" id="CLU_017633_0_7_4"/>
<dbReference type="Proteomes" id="UP000001421">
    <property type="component" value="Chromosome"/>
</dbReference>
<dbReference type="GO" id="GO:0005737">
    <property type="term" value="C:cytoplasm"/>
    <property type="evidence" value="ECO:0007669"/>
    <property type="project" value="UniProtKB-SubCell"/>
</dbReference>
<dbReference type="GO" id="GO:0005524">
    <property type="term" value="F:ATP binding"/>
    <property type="evidence" value="ECO:0007669"/>
    <property type="project" value="InterPro"/>
</dbReference>
<dbReference type="GO" id="GO:0031072">
    <property type="term" value="F:heat shock protein binding"/>
    <property type="evidence" value="ECO:0007669"/>
    <property type="project" value="InterPro"/>
</dbReference>
<dbReference type="GO" id="GO:0051082">
    <property type="term" value="F:unfolded protein binding"/>
    <property type="evidence" value="ECO:0007669"/>
    <property type="project" value="UniProtKB-UniRule"/>
</dbReference>
<dbReference type="GO" id="GO:0008270">
    <property type="term" value="F:zinc ion binding"/>
    <property type="evidence" value="ECO:0007669"/>
    <property type="project" value="UniProtKB-UniRule"/>
</dbReference>
<dbReference type="GO" id="GO:0051085">
    <property type="term" value="P:chaperone cofactor-dependent protein refolding"/>
    <property type="evidence" value="ECO:0007669"/>
    <property type="project" value="TreeGrafter"/>
</dbReference>
<dbReference type="GO" id="GO:0006260">
    <property type="term" value="P:DNA replication"/>
    <property type="evidence" value="ECO:0007669"/>
    <property type="project" value="UniProtKB-KW"/>
</dbReference>
<dbReference type="GO" id="GO:0042026">
    <property type="term" value="P:protein refolding"/>
    <property type="evidence" value="ECO:0007669"/>
    <property type="project" value="TreeGrafter"/>
</dbReference>
<dbReference type="GO" id="GO:0009408">
    <property type="term" value="P:response to heat"/>
    <property type="evidence" value="ECO:0007669"/>
    <property type="project" value="InterPro"/>
</dbReference>
<dbReference type="CDD" id="cd06257">
    <property type="entry name" value="DnaJ"/>
    <property type="match status" value="1"/>
</dbReference>
<dbReference type="CDD" id="cd10747">
    <property type="entry name" value="DnaJ_C"/>
    <property type="match status" value="1"/>
</dbReference>
<dbReference type="CDD" id="cd10719">
    <property type="entry name" value="DnaJ_zf"/>
    <property type="match status" value="1"/>
</dbReference>
<dbReference type="FunFam" id="1.10.287.110:FF:000034">
    <property type="entry name" value="Chaperone protein DnaJ"/>
    <property type="match status" value="1"/>
</dbReference>
<dbReference type="FunFam" id="2.10.230.10:FF:000002">
    <property type="entry name" value="Molecular chaperone DnaJ"/>
    <property type="match status" value="1"/>
</dbReference>
<dbReference type="FunFam" id="2.60.260.20:FF:000004">
    <property type="entry name" value="Molecular chaperone DnaJ"/>
    <property type="match status" value="1"/>
</dbReference>
<dbReference type="Gene3D" id="1.10.287.110">
    <property type="entry name" value="DnaJ domain"/>
    <property type="match status" value="1"/>
</dbReference>
<dbReference type="Gene3D" id="2.10.230.10">
    <property type="entry name" value="Heat shock protein DnaJ, cysteine-rich domain"/>
    <property type="match status" value="1"/>
</dbReference>
<dbReference type="Gene3D" id="2.60.260.20">
    <property type="entry name" value="Urease metallochaperone UreE, N-terminal domain"/>
    <property type="match status" value="2"/>
</dbReference>
<dbReference type="HAMAP" id="MF_01152">
    <property type="entry name" value="DnaJ"/>
    <property type="match status" value="1"/>
</dbReference>
<dbReference type="InterPro" id="IPR012724">
    <property type="entry name" value="DnaJ"/>
</dbReference>
<dbReference type="InterPro" id="IPR002939">
    <property type="entry name" value="DnaJ_C"/>
</dbReference>
<dbReference type="InterPro" id="IPR001623">
    <property type="entry name" value="DnaJ_domain"/>
</dbReference>
<dbReference type="InterPro" id="IPR018253">
    <property type="entry name" value="DnaJ_domain_CS"/>
</dbReference>
<dbReference type="InterPro" id="IPR008971">
    <property type="entry name" value="HSP40/DnaJ_pept-bd"/>
</dbReference>
<dbReference type="InterPro" id="IPR001305">
    <property type="entry name" value="HSP_DnaJ_Cys-rich_dom"/>
</dbReference>
<dbReference type="InterPro" id="IPR036410">
    <property type="entry name" value="HSP_DnaJ_Cys-rich_dom_sf"/>
</dbReference>
<dbReference type="InterPro" id="IPR036869">
    <property type="entry name" value="J_dom_sf"/>
</dbReference>
<dbReference type="NCBIfam" id="TIGR02349">
    <property type="entry name" value="DnaJ_bact"/>
    <property type="match status" value="1"/>
</dbReference>
<dbReference type="NCBIfam" id="NF008035">
    <property type="entry name" value="PRK10767.1"/>
    <property type="match status" value="1"/>
</dbReference>
<dbReference type="PANTHER" id="PTHR43096:SF48">
    <property type="entry name" value="CHAPERONE PROTEIN DNAJ"/>
    <property type="match status" value="1"/>
</dbReference>
<dbReference type="PANTHER" id="PTHR43096">
    <property type="entry name" value="DNAJ HOMOLOG 1, MITOCHONDRIAL-RELATED"/>
    <property type="match status" value="1"/>
</dbReference>
<dbReference type="Pfam" id="PF00226">
    <property type="entry name" value="DnaJ"/>
    <property type="match status" value="1"/>
</dbReference>
<dbReference type="Pfam" id="PF01556">
    <property type="entry name" value="DnaJ_C"/>
    <property type="match status" value="1"/>
</dbReference>
<dbReference type="Pfam" id="PF00684">
    <property type="entry name" value="DnaJ_CXXCXGXG"/>
    <property type="match status" value="1"/>
</dbReference>
<dbReference type="PRINTS" id="PR00625">
    <property type="entry name" value="JDOMAIN"/>
</dbReference>
<dbReference type="SMART" id="SM00271">
    <property type="entry name" value="DnaJ"/>
    <property type="match status" value="1"/>
</dbReference>
<dbReference type="SUPFAM" id="SSF46565">
    <property type="entry name" value="Chaperone J-domain"/>
    <property type="match status" value="1"/>
</dbReference>
<dbReference type="SUPFAM" id="SSF57938">
    <property type="entry name" value="DnaJ/Hsp40 cysteine-rich domain"/>
    <property type="match status" value="1"/>
</dbReference>
<dbReference type="SUPFAM" id="SSF49493">
    <property type="entry name" value="HSP40/DnaJ peptide-binding domain"/>
    <property type="match status" value="2"/>
</dbReference>
<dbReference type="PROSITE" id="PS00636">
    <property type="entry name" value="DNAJ_1"/>
    <property type="match status" value="1"/>
</dbReference>
<dbReference type="PROSITE" id="PS50076">
    <property type="entry name" value="DNAJ_2"/>
    <property type="match status" value="1"/>
</dbReference>
<dbReference type="PROSITE" id="PS51188">
    <property type="entry name" value="ZF_CR"/>
    <property type="match status" value="1"/>
</dbReference>
<accession>Q7W520</accession>
<comment type="function">
    <text evidence="1">Participates actively in the response to hyperosmotic and heat shock by preventing the aggregation of stress-denatured proteins and by disaggregating proteins, also in an autonomous, DnaK-independent fashion. Unfolded proteins bind initially to DnaJ; upon interaction with the DnaJ-bound protein, DnaK hydrolyzes its bound ATP, resulting in the formation of a stable complex. GrpE releases ADP from DnaK; ATP binding to DnaK triggers the release of the substrate protein, thus completing the reaction cycle. Several rounds of ATP-dependent interactions between DnaJ, DnaK and GrpE are required for fully efficient folding. Also involved, together with DnaK and GrpE, in the DNA replication of plasmids through activation of initiation proteins.</text>
</comment>
<comment type="cofactor">
    <cofactor evidence="1">
        <name>Zn(2+)</name>
        <dbReference type="ChEBI" id="CHEBI:29105"/>
    </cofactor>
    <text evidence="1">Binds 2 Zn(2+) ions per monomer.</text>
</comment>
<comment type="subunit">
    <text evidence="1">Homodimer.</text>
</comment>
<comment type="subcellular location">
    <subcellularLocation>
        <location evidence="1">Cytoplasm</location>
    </subcellularLocation>
</comment>
<comment type="domain">
    <text evidence="1">The J domain is necessary and sufficient to stimulate DnaK ATPase activity. Zinc center 1 plays an important role in the autonomous, DnaK-independent chaperone activity of DnaJ. Zinc center 2 is essential for interaction with DnaK and for DnaJ activity.</text>
</comment>
<comment type="similarity">
    <text evidence="1">Belongs to the DnaJ family.</text>
</comment>
<keyword id="KW-0143">Chaperone</keyword>
<keyword id="KW-0963">Cytoplasm</keyword>
<keyword id="KW-0235">DNA replication</keyword>
<keyword id="KW-0479">Metal-binding</keyword>
<keyword id="KW-0677">Repeat</keyword>
<keyword id="KW-0346">Stress response</keyword>
<keyword id="KW-0862">Zinc</keyword>
<keyword id="KW-0863">Zinc-finger</keyword>
<gene>
    <name evidence="1" type="primary">dnaJ</name>
    <name type="ordered locus">BPP3484</name>
</gene>
<organism>
    <name type="scientific">Bordetella parapertussis (strain 12822 / ATCC BAA-587 / NCTC 13253)</name>
    <dbReference type="NCBI Taxonomy" id="257311"/>
    <lineage>
        <taxon>Bacteria</taxon>
        <taxon>Pseudomonadati</taxon>
        <taxon>Pseudomonadota</taxon>
        <taxon>Betaproteobacteria</taxon>
        <taxon>Burkholderiales</taxon>
        <taxon>Alcaligenaceae</taxon>
        <taxon>Bordetella</taxon>
    </lineage>
</organism>
<sequence length="377" mass="40551">MAKRDYYEVLGVAKNASDEDLKKAYRKLAMKYHPDRNPDSKEAEEKFKEAKEAYEVLGDEQKRAAYDRYGHAGVDPNAAGMGGGMGGGMGGGFADAFGDIFGEIFGAGRRGGGGPQVYRGADLKYALEITLEQAASGFDTEIRVPSWENCDTCHGSGAKAGTSPKTCRTCGGSGAVRMQQGFFSVQQTCPTCHGTGKEITDPCPSCDGVGRTRRNKTLQVKIPAGIDDGMRIRSSGNGEPGINGGPPGDLYVEIHIKQHKIFQRDGDDLHCELTIPFTTAALGGELQVPTLGGKAEISIPEGTQSGKTFRLRAKGIRGVRGSYPGDLYCHVVVETPVRLSDEQKAILRQFEASLNDGGDRHSPQSKSWTDRVKEFFS</sequence>
<protein>
    <recommendedName>
        <fullName evidence="1">Chaperone protein DnaJ</fullName>
    </recommendedName>
</protein>
<evidence type="ECO:0000255" key="1">
    <source>
        <dbReference type="HAMAP-Rule" id="MF_01152"/>
    </source>
</evidence>
<proteinExistence type="inferred from homology"/>